<dbReference type="EC" id="2.8.1.6" evidence="1"/>
<dbReference type="EMBL" id="CP000644">
    <property type="protein sequence ID" value="ABO90889.1"/>
    <property type="molecule type" value="Genomic_DNA"/>
</dbReference>
<dbReference type="RefSeq" id="WP_005313000.1">
    <property type="nucleotide sequence ID" value="NC_009348.1"/>
</dbReference>
<dbReference type="SMR" id="A4SPR7"/>
<dbReference type="STRING" id="29491.GCA_000820065_00843"/>
<dbReference type="KEGG" id="asa:ASA_2877"/>
<dbReference type="eggNOG" id="COG0502">
    <property type="taxonomic scope" value="Bacteria"/>
</dbReference>
<dbReference type="HOGENOM" id="CLU_033172_1_2_6"/>
<dbReference type="UniPathway" id="UPA00078">
    <property type="reaction ID" value="UER00162"/>
</dbReference>
<dbReference type="Proteomes" id="UP000000225">
    <property type="component" value="Chromosome"/>
</dbReference>
<dbReference type="GO" id="GO:0051537">
    <property type="term" value="F:2 iron, 2 sulfur cluster binding"/>
    <property type="evidence" value="ECO:0007669"/>
    <property type="project" value="UniProtKB-KW"/>
</dbReference>
<dbReference type="GO" id="GO:0051539">
    <property type="term" value="F:4 iron, 4 sulfur cluster binding"/>
    <property type="evidence" value="ECO:0007669"/>
    <property type="project" value="UniProtKB-KW"/>
</dbReference>
<dbReference type="GO" id="GO:0004076">
    <property type="term" value="F:biotin synthase activity"/>
    <property type="evidence" value="ECO:0007669"/>
    <property type="project" value="UniProtKB-UniRule"/>
</dbReference>
<dbReference type="GO" id="GO:0005506">
    <property type="term" value="F:iron ion binding"/>
    <property type="evidence" value="ECO:0007669"/>
    <property type="project" value="UniProtKB-UniRule"/>
</dbReference>
<dbReference type="GO" id="GO:0009102">
    <property type="term" value="P:biotin biosynthetic process"/>
    <property type="evidence" value="ECO:0007669"/>
    <property type="project" value="UniProtKB-UniRule"/>
</dbReference>
<dbReference type="CDD" id="cd01335">
    <property type="entry name" value="Radical_SAM"/>
    <property type="match status" value="1"/>
</dbReference>
<dbReference type="FunFam" id="3.20.20.70:FF:000011">
    <property type="entry name" value="Biotin synthase"/>
    <property type="match status" value="1"/>
</dbReference>
<dbReference type="Gene3D" id="3.20.20.70">
    <property type="entry name" value="Aldolase class I"/>
    <property type="match status" value="1"/>
</dbReference>
<dbReference type="HAMAP" id="MF_01694">
    <property type="entry name" value="BioB"/>
    <property type="match status" value="1"/>
</dbReference>
<dbReference type="InterPro" id="IPR013785">
    <property type="entry name" value="Aldolase_TIM"/>
</dbReference>
<dbReference type="InterPro" id="IPR010722">
    <property type="entry name" value="BATS_dom"/>
</dbReference>
<dbReference type="InterPro" id="IPR002684">
    <property type="entry name" value="Biotin_synth/BioAB"/>
</dbReference>
<dbReference type="InterPro" id="IPR024177">
    <property type="entry name" value="Biotin_synthase"/>
</dbReference>
<dbReference type="InterPro" id="IPR006638">
    <property type="entry name" value="Elp3/MiaA/NifB-like_rSAM"/>
</dbReference>
<dbReference type="InterPro" id="IPR007197">
    <property type="entry name" value="rSAM"/>
</dbReference>
<dbReference type="NCBIfam" id="TIGR00433">
    <property type="entry name" value="bioB"/>
    <property type="match status" value="1"/>
</dbReference>
<dbReference type="PANTHER" id="PTHR22976">
    <property type="entry name" value="BIOTIN SYNTHASE"/>
    <property type="match status" value="1"/>
</dbReference>
<dbReference type="PANTHER" id="PTHR22976:SF2">
    <property type="entry name" value="BIOTIN SYNTHASE, MITOCHONDRIAL"/>
    <property type="match status" value="1"/>
</dbReference>
<dbReference type="Pfam" id="PF06968">
    <property type="entry name" value="BATS"/>
    <property type="match status" value="1"/>
</dbReference>
<dbReference type="Pfam" id="PF04055">
    <property type="entry name" value="Radical_SAM"/>
    <property type="match status" value="1"/>
</dbReference>
<dbReference type="PIRSF" id="PIRSF001619">
    <property type="entry name" value="Biotin_synth"/>
    <property type="match status" value="1"/>
</dbReference>
<dbReference type="SFLD" id="SFLDF00272">
    <property type="entry name" value="biotin_synthase"/>
    <property type="match status" value="1"/>
</dbReference>
<dbReference type="SFLD" id="SFLDG01278">
    <property type="entry name" value="biotin_synthase_like"/>
    <property type="match status" value="1"/>
</dbReference>
<dbReference type="SMART" id="SM00876">
    <property type="entry name" value="BATS"/>
    <property type="match status" value="1"/>
</dbReference>
<dbReference type="SMART" id="SM00729">
    <property type="entry name" value="Elp3"/>
    <property type="match status" value="1"/>
</dbReference>
<dbReference type="SUPFAM" id="SSF102114">
    <property type="entry name" value="Radical SAM enzymes"/>
    <property type="match status" value="1"/>
</dbReference>
<dbReference type="PROSITE" id="PS51918">
    <property type="entry name" value="RADICAL_SAM"/>
    <property type="match status" value="1"/>
</dbReference>
<comment type="function">
    <text evidence="1">Catalyzes the conversion of dethiobiotin (DTB) to biotin by the insertion of a sulfur atom into dethiobiotin via a radical-based mechanism.</text>
</comment>
<comment type="catalytic activity">
    <reaction evidence="1">
        <text>(4R,5S)-dethiobiotin + (sulfur carrier)-SH + 2 reduced [2Fe-2S]-[ferredoxin] + 2 S-adenosyl-L-methionine = (sulfur carrier)-H + biotin + 2 5'-deoxyadenosine + 2 L-methionine + 2 oxidized [2Fe-2S]-[ferredoxin]</text>
        <dbReference type="Rhea" id="RHEA:22060"/>
        <dbReference type="Rhea" id="RHEA-COMP:10000"/>
        <dbReference type="Rhea" id="RHEA-COMP:10001"/>
        <dbReference type="Rhea" id="RHEA-COMP:14737"/>
        <dbReference type="Rhea" id="RHEA-COMP:14739"/>
        <dbReference type="ChEBI" id="CHEBI:17319"/>
        <dbReference type="ChEBI" id="CHEBI:29917"/>
        <dbReference type="ChEBI" id="CHEBI:33737"/>
        <dbReference type="ChEBI" id="CHEBI:33738"/>
        <dbReference type="ChEBI" id="CHEBI:57586"/>
        <dbReference type="ChEBI" id="CHEBI:57844"/>
        <dbReference type="ChEBI" id="CHEBI:59789"/>
        <dbReference type="ChEBI" id="CHEBI:64428"/>
        <dbReference type="ChEBI" id="CHEBI:149473"/>
        <dbReference type="EC" id="2.8.1.6"/>
    </reaction>
</comment>
<comment type="cofactor">
    <cofactor evidence="1">
        <name>[4Fe-4S] cluster</name>
        <dbReference type="ChEBI" id="CHEBI:49883"/>
    </cofactor>
    <text evidence="1">Binds 1 [4Fe-4S] cluster. The cluster is coordinated with 3 cysteines and an exchangeable S-adenosyl-L-methionine.</text>
</comment>
<comment type="cofactor">
    <cofactor evidence="1">
        <name>[2Fe-2S] cluster</name>
        <dbReference type="ChEBI" id="CHEBI:190135"/>
    </cofactor>
    <text evidence="1">Binds 1 [2Fe-2S] cluster. The cluster is coordinated with 3 cysteines and 1 arginine.</text>
</comment>
<comment type="pathway">
    <text evidence="1">Cofactor biosynthesis; biotin biosynthesis; biotin from 7,8-diaminononanoate: step 2/2.</text>
</comment>
<comment type="subunit">
    <text evidence="1">Homodimer.</text>
</comment>
<comment type="similarity">
    <text evidence="1">Belongs to the radical SAM superfamily. Biotin synthase family.</text>
</comment>
<gene>
    <name evidence="1" type="primary">bioB</name>
    <name type="ordered locus">ASA_2877</name>
</gene>
<keyword id="KW-0001">2Fe-2S</keyword>
<keyword id="KW-0004">4Fe-4S</keyword>
<keyword id="KW-0093">Biotin biosynthesis</keyword>
<keyword id="KW-0408">Iron</keyword>
<keyword id="KW-0411">Iron-sulfur</keyword>
<keyword id="KW-0479">Metal-binding</keyword>
<keyword id="KW-0949">S-adenosyl-L-methionine</keyword>
<keyword id="KW-0808">Transferase</keyword>
<name>BIOB_AERS4</name>
<evidence type="ECO:0000255" key="1">
    <source>
        <dbReference type="HAMAP-Rule" id="MF_01694"/>
    </source>
</evidence>
<evidence type="ECO:0000255" key="2">
    <source>
        <dbReference type="PROSITE-ProRule" id="PRU01266"/>
    </source>
</evidence>
<organism>
    <name type="scientific">Aeromonas salmonicida (strain A449)</name>
    <dbReference type="NCBI Taxonomy" id="382245"/>
    <lineage>
        <taxon>Bacteria</taxon>
        <taxon>Pseudomonadati</taxon>
        <taxon>Pseudomonadota</taxon>
        <taxon>Gammaproteobacteria</taxon>
        <taxon>Aeromonadales</taxon>
        <taxon>Aeromonadaceae</taxon>
        <taxon>Aeromonas</taxon>
    </lineage>
</organism>
<proteinExistence type="inferred from homology"/>
<sequence>MNAHTAGGHALRHDWTLSEVQALFALPFNDLLFQAQTIHRAHFDPNEVQVSTLLSIKTGACPEDCKYCPQSARYHTGLETERLMEVEKVLERAREARANGSSRFCMGAAWRNPKERDMPYILRMIEEVRGLGMETCMTLGMLTADQAARLGAAGLDYYNHNLDTSPEFYGEIISTRTYQDRLDTLEHVRGAGMKVCSGGIVGMGEQAKDRAGLLMALANLPRHPESVPINMLVKVKGTPLENEANLDSFEFIRTIAVARIMMPASHVRLSAGREKMNEQMQAMCFMAGANSIFYGCKLLTTPNPDENSDMQLFKRLGIRPAQRAQKPDQIQEEEILAEVSRQNAPDEMFYDATRPRAGVARS</sequence>
<reference key="1">
    <citation type="journal article" date="2008" name="BMC Genomics">
        <title>The genome of Aeromonas salmonicida subsp. salmonicida A449: insights into the evolution of a fish pathogen.</title>
        <authorList>
            <person name="Reith M.E."/>
            <person name="Singh R.K."/>
            <person name="Curtis B."/>
            <person name="Boyd J.M."/>
            <person name="Bouevitch A."/>
            <person name="Kimball J."/>
            <person name="Munholland J."/>
            <person name="Murphy C."/>
            <person name="Sarty D."/>
            <person name="Williams J."/>
            <person name="Nash J.H."/>
            <person name="Johnson S.C."/>
            <person name="Brown L.L."/>
        </authorList>
    </citation>
    <scope>NUCLEOTIDE SEQUENCE [LARGE SCALE GENOMIC DNA]</scope>
    <source>
        <strain>A449</strain>
    </source>
</reference>
<feature type="chain" id="PRO_0000381185" description="Biotin synthase">
    <location>
        <begin position="1"/>
        <end position="362"/>
    </location>
</feature>
<feature type="domain" description="Radical SAM core" evidence="2">
    <location>
        <begin position="46"/>
        <end position="273"/>
    </location>
</feature>
<feature type="binding site" evidence="1">
    <location>
        <position position="61"/>
    </location>
    <ligand>
        <name>[4Fe-4S] cluster</name>
        <dbReference type="ChEBI" id="CHEBI:49883"/>
        <note>4Fe-4S-S-AdoMet</note>
    </ligand>
</feature>
<feature type="binding site" evidence="1">
    <location>
        <position position="65"/>
    </location>
    <ligand>
        <name>[4Fe-4S] cluster</name>
        <dbReference type="ChEBI" id="CHEBI:49883"/>
        <note>4Fe-4S-S-AdoMet</note>
    </ligand>
</feature>
<feature type="binding site" evidence="1">
    <location>
        <position position="68"/>
    </location>
    <ligand>
        <name>[4Fe-4S] cluster</name>
        <dbReference type="ChEBI" id="CHEBI:49883"/>
        <note>4Fe-4S-S-AdoMet</note>
    </ligand>
</feature>
<feature type="binding site" evidence="1">
    <location>
        <position position="105"/>
    </location>
    <ligand>
        <name>[2Fe-2S] cluster</name>
        <dbReference type="ChEBI" id="CHEBI:190135"/>
    </ligand>
</feature>
<feature type="binding site" evidence="1">
    <location>
        <position position="136"/>
    </location>
    <ligand>
        <name>[2Fe-2S] cluster</name>
        <dbReference type="ChEBI" id="CHEBI:190135"/>
    </ligand>
</feature>
<feature type="binding site" evidence="1">
    <location>
        <position position="196"/>
    </location>
    <ligand>
        <name>[2Fe-2S] cluster</name>
        <dbReference type="ChEBI" id="CHEBI:190135"/>
    </ligand>
</feature>
<feature type="binding site" evidence="1">
    <location>
        <position position="268"/>
    </location>
    <ligand>
        <name>[2Fe-2S] cluster</name>
        <dbReference type="ChEBI" id="CHEBI:190135"/>
    </ligand>
</feature>
<protein>
    <recommendedName>
        <fullName evidence="1">Biotin synthase</fullName>
        <ecNumber evidence="1">2.8.1.6</ecNumber>
    </recommendedName>
</protein>
<accession>A4SPR7</accession>